<protein>
    <recommendedName>
        <fullName evidence="1">Ubiquinone biosynthesis O-methyltransferase</fullName>
    </recommendedName>
    <alternativeName>
        <fullName evidence="1">2-polyprenyl-6-hydroxyphenol methylase</fullName>
        <ecNumber evidence="1">2.1.1.222</ecNumber>
    </alternativeName>
    <alternativeName>
        <fullName evidence="1">3-demethylubiquinone 3-O-methyltransferase</fullName>
        <ecNumber evidence="1">2.1.1.64</ecNumber>
    </alternativeName>
</protein>
<name>UBIG_RHILW</name>
<proteinExistence type="inferred from homology"/>
<sequence>MTEGARSTIDQGEVDRFSAMAAEWWSPTGKFRPLHKFNPVRLTYIRDKACENFGRDPKSARPLEGLRVLDIGCGGGLLSEPVARMGATVTGADPSEKNIGIASTHAKASGVSVDYRAVTAEELADAGETFDIVLNMEVVEHVADVEFFMTTCAKMVRPGGLIFVATINRTMKAAALAIFAAENILRWLPRGTHQYEKLVRPEELEKPLTASGLEITDRTGVFFNPLSNQWNLSKDMDVNYMLLAKRSAQLDR</sequence>
<gene>
    <name evidence="1" type="primary">ubiG</name>
    <name type="ordered locus">Rleg2_3527</name>
</gene>
<keyword id="KW-0489">Methyltransferase</keyword>
<keyword id="KW-1185">Reference proteome</keyword>
<keyword id="KW-0949">S-adenosyl-L-methionine</keyword>
<keyword id="KW-0808">Transferase</keyword>
<keyword id="KW-0831">Ubiquinone biosynthesis</keyword>
<comment type="function">
    <text evidence="1">O-methyltransferase that catalyzes the 2 O-methylation steps in the ubiquinone biosynthetic pathway.</text>
</comment>
<comment type="catalytic activity">
    <reaction evidence="1">
        <text>a 3-demethylubiquinol + S-adenosyl-L-methionine = a ubiquinol + S-adenosyl-L-homocysteine + H(+)</text>
        <dbReference type="Rhea" id="RHEA:44380"/>
        <dbReference type="Rhea" id="RHEA-COMP:9566"/>
        <dbReference type="Rhea" id="RHEA-COMP:10914"/>
        <dbReference type="ChEBI" id="CHEBI:15378"/>
        <dbReference type="ChEBI" id="CHEBI:17976"/>
        <dbReference type="ChEBI" id="CHEBI:57856"/>
        <dbReference type="ChEBI" id="CHEBI:59789"/>
        <dbReference type="ChEBI" id="CHEBI:84422"/>
        <dbReference type="EC" id="2.1.1.64"/>
    </reaction>
</comment>
<comment type="catalytic activity">
    <reaction evidence="1">
        <text>a 3-(all-trans-polyprenyl)benzene-1,2-diol + S-adenosyl-L-methionine = a 2-methoxy-6-(all-trans-polyprenyl)phenol + S-adenosyl-L-homocysteine + H(+)</text>
        <dbReference type="Rhea" id="RHEA:31411"/>
        <dbReference type="Rhea" id="RHEA-COMP:9550"/>
        <dbReference type="Rhea" id="RHEA-COMP:9551"/>
        <dbReference type="ChEBI" id="CHEBI:15378"/>
        <dbReference type="ChEBI" id="CHEBI:57856"/>
        <dbReference type="ChEBI" id="CHEBI:59789"/>
        <dbReference type="ChEBI" id="CHEBI:62729"/>
        <dbReference type="ChEBI" id="CHEBI:62731"/>
        <dbReference type="EC" id="2.1.1.222"/>
    </reaction>
</comment>
<comment type="pathway">
    <text evidence="1">Cofactor biosynthesis; ubiquinone biosynthesis.</text>
</comment>
<comment type="similarity">
    <text evidence="1">Belongs to the methyltransferase superfamily. UbiG/COQ3 family.</text>
</comment>
<feature type="chain" id="PRO_1000199693" description="Ubiquinone biosynthesis O-methyltransferase">
    <location>
        <begin position="1"/>
        <end position="252"/>
    </location>
</feature>
<feature type="binding site" evidence="1">
    <location>
        <position position="41"/>
    </location>
    <ligand>
        <name>S-adenosyl-L-methionine</name>
        <dbReference type="ChEBI" id="CHEBI:59789"/>
    </ligand>
</feature>
<feature type="binding site" evidence="1">
    <location>
        <position position="72"/>
    </location>
    <ligand>
        <name>S-adenosyl-L-methionine</name>
        <dbReference type="ChEBI" id="CHEBI:59789"/>
    </ligand>
</feature>
<feature type="binding site" evidence="1">
    <location>
        <position position="93"/>
    </location>
    <ligand>
        <name>S-adenosyl-L-methionine</name>
        <dbReference type="ChEBI" id="CHEBI:59789"/>
    </ligand>
</feature>
<feature type="binding site" evidence="1">
    <location>
        <position position="136"/>
    </location>
    <ligand>
        <name>S-adenosyl-L-methionine</name>
        <dbReference type="ChEBI" id="CHEBI:59789"/>
    </ligand>
</feature>
<reference key="1">
    <citation type="journal article" date="2010" name="Stand. Genomic Sci.">
        <title>Complete genome sequence of Rhizobium leguminosarum bv trifolii strain WSM2304, an effective microsymbiont of the South American clover Trifolium polymorphum.</title>
        <authorList>
            <person name="Reeve W."/>
            <person name="O'Hara G."/>
            <person name="Chain P."/>
            <person name="Ardley J."/>
            <person name="Brau L."/>
            <person name="Nandesena K."/>
            <person name="Tiwari R."/>
            <person name="Malfatti S."/>
            <person name="Kiss H."/>
            <person name="Lapidus A."/>
            <person name="Copeland A."/>
            <person name="Nolan M."/>
            <person name="Land M."/>
            <person name="Ivanova N."/>
            <person name="Mavromatis K."/>
            <person name="Markowitz V."/>
            <person name="Kyrpides N."/>
            <person name="Melino V."/>
            <person name="Denton M."/>
            <person name="Yates R."/>
            <person name="Howieson J."/>
        </authorList>
    </citation>
    <scope>NUCLEOTIDE SEQUENCE [LARGE SCALE GENOMIC DNA]</scope>
    <source>
        <strain>WSM2304</strain>
    </source>
</reference>
<dbReference type="EC" id="2.1.1.222" evidence="1"/>
<dbReference type="EC" id="2.1.1.64" evidence="1"/>
<dbReference type="EMBL" id="CP001191">
    <property type="protein sequence ID" value="ACI56794.1"/>
    <property type="molecule type" value="Genomic_DNA"/>
</dbReference>
<dbReference type="RefSeq" id="WP_012559095.1">
    <property type="nucleotide sequence ID" value="NC_011369.1"/>
</dbReference>
<dbReference type="SMR" id="B5ZRR7"/>
<dbReference type="STRING" id="395492.Rleg2_3527"/>
<dbReference type="KEGG" id="rlt:Rleg2_3527"/>
<dbReference type="eggNOG" id="COG2227">
    <property type="taxonomic scope" value="Bacteria"/>
</dbReference>
<dbReference type="HOGENOM" id="CLU_042432_0_0_5"/>
<dbReference type="UniPathway" id="UPA00232"/>
<dbReference type="Proteomes" id="UP000008330">
    <property type="component" value="Chromosome"/>
</dbReference>
<dbReference type="GO" id="GO:0102208">
    <property type="term" value="F:2-polyprenyl-6-hydroxyphenol methylase activity"/>
    <property type="evidence" value="ECO:0007669"/>
    <property type="project" value="UniProtKB-EC"/>
</dbReference>
<dbReference type="GO" id="GO:0061542">
    <property type="term" value="F:3-demethylubiquinol 3-O-methyltransferase activity"/>
    <property type="evidence" value="ECO:0007669"/>
    <property type="project" value="UniProtKB-UniRule"/>
</dbReference>
<dbReference type="GO" id="GO:0010420">
    <property type="term" value="F:polyprenyldihydroxybenzoate methyltransferase activity"/>
    <property type="evidence" value="ECO:0007669"/>
    <property type="project" value="InterPro"/>
</dbReference>
<dbReference type="GO" id="GO:0032259">
    <property type="term" value="P:methylation"/>
    <property type="evidence" value="ECO:0007669"/>
    <property type="project" value="UniProtKB-KW"/>
</dbReference>
<dbReference type="CDD" id="cd02440">
    <property type="entry name" value="AdoMet_MTases"/>
    <property type="match status" value="1"/>
</dbReference>
<dbReference type="Gene3D" id="3.40.50.150">
    <property type="entry name" value="Vaccinia Virus protein VP39"/>
    <property type="match status" value="1"/>
</dbReference>
<dbReference type="HAMAP" id="MF_00472">
    <property type="entry name" value="UbiG"/>
    <property type="match status" value="1"/>
</dbReference>
<dbReference type="InterPro" id="IPR029063">
    <property type="entry name" value="SAM-dependent_MTases_sf"/>
</dbReference>
<dbReference type="InterPro" id="IPR010233">
    <property type="entry name" value="UbiG_MeTrfase"/>
</dbReference>
<dbReference type="NCBIfam" id="TIGR01983">
    <property type="entry name" value="UbiG"/>
    <property type="match status" value="1"/>
</dbReference>
<dbReference type="PANTHER" id="PTHR43464">
    <property type="entry name" value="METHYLTRANSFERASE"/>
    <property type="match status" value="1"/>
</dbReference>
<dbReference type="PANTHER" id="PTHR43464:SF19">
    <property type="entry name" value="UBIQUINONE BIOSYNTHESIS O-METHYLTRANSFERASE, MITOCHONDRIAL"/>
    <property type="match status" value="1"/>
</dbReference>
<dbReference type="Pfam" id="PF13489">
    <property type="entry name" value="Methyltransf_23"/>
    <property type="match status" value="1"/>
</dbReference>
<dbReference type="SUPFAM" id="SSF53335">
    <property type="entry name" value="S-adenosyl-L-methionine-dependent methyltransferases"/>
    <property type="match status" value="1"/>
</dbReference>
<accession>B5ZRR7</accession>
<organism>
    <name type="scientific">Rhizobium leguminosarum bv. trifolii (strain WSM2304)</name>
    <dbReference type="NCBI Taxonomy" id="395492"/>
    <lineage>
        <taxon>Bacteria</taxon>
        <taxon>Pseudomonadati</taxon>
        <taxon>Pseudomonadota</taxon>
        <taxon>Alphaproteobacteria</taxon>
        <taxon>Hyphomicrobiales</taxon>
        <taxon>Rhizobiaceae</taxon>
        <taxon>Rhizobium/Agrobacterium group</taxon>
        <taxon>Rhizobium</taxon>
    </lineage>
</organism>
<evidence type="ECO:0000255" key="1">
    <source>
        <dbReference type="HAMAP-Rule" id="MF_00472"/>
    </source>
</evidence>